<keyword id="KW-1185">Reference proteome</keyword>
<keyword id="KW-0808">Transferase</keyword>
<feature type="chain" id="PRO_0000185801" description="Glutathione S-transferase">
    <location>
        <begin position="1"/>
        <end position="221"/>
    </location>
</feature>
<feature type="domain" description="GST N-terminal">
    <location>
        <begin position="3"/>
        <end position="83"/>
    </location>
</feature>
<feature type="domain" description="GST C-terminal">
    <location>
        <begin position="85"/>
        <end position="208"/>
    </location>
</feature>
<feature type="binding site" evidence="2">
    <location>
        <position position="9"/>
    </location>
    <ligand>
        <name>glutathione</name>
        <dbReference type="ChEBI" id="CHEBI:57925"/>
    </ligand>
</feature>
<feature type="binding site" evidence="2">
    <location>
        <position position="45"/>
    </location>
    <ligand>
        <name>glutathione</name>
        <dbReference type="ChEBI" id="CHEBI:57925"/>
    </ligand>
</feature>
<feature type="binding site" evidence="3">
    <location>
        <begin position="54"/>
        <end position="55"/>
    </location>
    <ligand>
        <name>glutathione</name>
        <dbReference type="ChEBI" id="CHEBI:57925"/>
    </ligand>
</feature>
<feature type="binding site" evidence="2">
    <location>
        <begin position="67"/>
        <end position="68"/>
    </location>
    <ligand>
        <name>glutathione</name>
        <dbReference type="ChEBI" id="CHEBI:57925"/>
    </ligand>
</feature>
<accession>Q08392</accession>
<comment type="function">
    <text evidence="1">Glutathione S-transferase that catalyzes the nucleophilic attack of the sulfur atom of glutathione on the electrophilic groups of a wide range of exogenous and endogenous compounds. Involved in the formation of glutathione conjugates of both prostaglandin A2 (PGA2) and prostaglandin J2 (PGJ2). It also catalyzes the isomerization of D5-androstene-3,17-dione (AD) into D4-androstene-3,17-dione and may therefore play an important role in hormone biosynthesis. Through its glutathione-dependent peroxidase activity toward the fatty acid hydroperoxide (13S)-hydroperoxy-(9Z,11E)-octadecadienoate/13-HPODE it is also involved in the metabolism of oxidized linoleic acid.</text>
</comment>
<comment type="catalytic activity">
    <reaction evidence="1">
        <text>RX + glutathione = an S-substituted glutathione + a halide anion + H(+)</text>
        <dbReference type="Rhea" id="RHEA:16437"/>
        <dbReference type="ChEBI" id="CHEBI:15378"/>
        <dbReference type="ChEBI" id="CHEBI:16042"/>
        <dbReference type="ChEBI" id="CHEBI:17792"/>
        <dbReference type="ChEBI" id="CHEBI:57925"/>
        <dbReference type="ChEBI" id="CHEBI:90779"/>
        <dbReference type="EC" id="2.5.1.18"/>
    </reaction>
    <physiologicalReaction direction="left-to-right" evidence="1">
        <dbReference type="Rhea" id="RHEA:16438"/>
    </physiologicalReaction>
</comment>
<comment type="catalytic activity">
    <reaction evidence="1">
        <text>prostaglandin A2 + glutathione = prostaglandin A2-S-(R)-glutathione</text>
        <dbReference type="Rhea" id="RHEA:50796"/>
        <dbReference type="ChEBI" id="CHEBI:57925"/>
        <dbReference type="ChEBI" id="CHEBI:133370"/>
        <dbReference type="ChEBI" id="CHEBI:133768"/>
    </reaction>
    <physiologicalReaction direction="left-to-right" evidence="1">
        <dbReference type="Rhea" id="RHEA:50797"/>
    </physiologicalReaction>
</comment>
<comment type="catalytic activity">
    <reaction evidence="1">
        <text>prostaglandin J2 + glutathione = prostaglandin J2-S-(R)-glutathione</text>
        <dbReference type="Rhea" id="RHEA:50804"/>
        <dbReference type="ChEBI" id="CHEBI:57925"/>
        <dbReference type="ChEBI" id="CHEBI:133396"/>
        <dbReference type="ChEBI" id="CHEBI:133771"/>
    </reaction>
    <physiologicalReaction direction="left-to-right" evidence="1">
        <dbReference type="Rhea" id="RHEA:50805"/>
    </physiologicalReaction>
</comment>
<comment type="catalytic activity">
    <reaction evidence="1">
        <text>(13S)-hydroperoxy-(9Z,11E)-octadecadienoate + 2 glutathione = (13S)-hydroxy-(9Z,11E)-octadecadienoate + glutathione disulfide + H2O</text>
        <dbReference type="Rhea" id="RHEA:48888"/>
        <dbReference type="ChEBI" id="CHEBI:15377"/>
        <dbReference type="ChEBI" id="CHEBI:57466"/>
        <dbReference type="ChEBI" id="CHEBI:57925"/>
        <dbReference type="ChEBI" id="CHEBI:58297"/>
        <dbReference type="ChEBI" id="CHEBI:90850"/>
    </reaction>
    <physiologicalReaction direction="left-to-right" evidence="1">
        <dbReference type="Rhea" id="RHEA:48889"/>
    </physiologicalReaction>
</comment>
<comment type="catalytic activity">
    <reaction evidence="1">
        <text>androst-5-ene-3,17-dione = androst-4-ene-3,17-dione</text>
        <dbReference type="Rhea" id="RHEA:43936"/>
        <dbReference type="ChEBI" id="CHEBI:16422"/>
        <dbReference type="ChEBI" id="CHEBI:83865"/>
    </reaction>
    <physiologicalReaction direction="left-to-right" evidence="1">
        <dbReference type="Rhea" id="RHEA:43937"/>
    </physiologicalReaction>
</comment>
<comment type="subunit">
    <text evidence="1">Homodimer or heterodimer of GSTA1 and GSTA2.</text>
</comment>
<comment type="similarity">
    <text evidence="4">Belongs to the GST superfamily. Alpha family.</text>
</comment>
<dbReference type="EC" id="2.5.1.18" evidence="1"/>
<dbReference type="EMBL" id="L15386">
    <property type="protein sequence ID" value="AAA16572.1"/>
    <property type="molecule type" value="mRNA"/>
</dbReference>
<dbReference type="PIR" id="S43431">
    <property type="entry name" value="S43431"/>
</dbReference>
<dbReference type="RefSeq" id="NP_001001777.1">
    <property type="nucleotide sequence ID" value="NM_001001777.2"/>
</dbReference>
<dbReference type="SMR" id="Q08392"/>
<dbReference type="FunCoup" id="Q08392">
    <property type="interactions" value="69"/>
</dbReference>
<dbReference type="STRING" id="9031.ENSGALP00000026286"/>
<dbReference type="PaxDb" id="9031-ENSGALP00000026286"/>
<dbReference type="GeneID" id="414896"/>
<dbReference type="KEGG" id="gga:414896"/>
<dbReference type="CTD" id="2940"/>
<dbReference type="VEuPathDB" id="HostDB:geneid_414896"/>
<dbReference type="eggNOG" id="KOG1695">
    <property type="taxonomic scope" value="Eukaryota"/>
</dbReference>
<dbReference type="HOGENOM" id="CLU_039475_4_0_1"/>
<dbReference type="InParanoid" id="Q08392"/>
<dbReference type="OMA" id="ARYPAKW"/>
<dbReference type="OrthoDB" id="414243at2759"/>
<dbReference type="PhylomeDB" id="Q08392"/>
<dbReference type="TreeFam" id="TF105321"/>
<dbReference type="SABIO-RK" id="Q08392"/>
<dbReference type="PRO" id="PR:Q08392"/>
<dbReference type="Proteomes" id="UP000000539">
    <property type="component" value="Chromosome 3"/>
</dbReference>
<dbReference type="Bgee" id="ENSGALG00000016325">
    <property type="expression patterns" value="Expressed in colon and 11 other cell types or tissues"/>
</dbReference>
<dbReference type="GO" id="GO:0005615">
    <property type="term" value="C:extracellular space"/>
    <property type="evidence" value="ECO:0000314"/>
    <property type="project" value="AgBase"/>
</dbReference>
<dbReference type="GO" id="GO:0004364">
    <property type="term" value="F:glutathione transferase activity"/>
    <property type="evidence" value="ECO:0000250"/>
    <property type="project" value="UniProtKB"/>
</dbReference>
<dbReference type="GO" id="GO:0006749">
    <property type="term" value="P:glutathione metabolic process"/>
    <property type="evidence" value="ECO:0000250"/>
    <property type="project" value="UniProtKB"/>
</dbReference>
<dbReference type="GO" id="GO:0006805">
    <property type="term" value="P:xenobiotic metabolic process"/>
    <property type="evidence" value="ECO:0000318"/>
    <property type="project" value="GO_Central"/>
</dbReference>
<dbReference type="CDD" id="cd03208">
    <property type="entry name" value="GST_C_Alpha"/>
    <property type="match status" value="1"/>
</dbReference>
<dbReference type="CDD" id="cd03077">
    <property type="entry name" value="GST_N_Alpha"/>
    <property type="match status" value="1"/>
</dbReference>
<dbReference type="FunFam" id="1.20.1050.10:FF:000005">
    <property type="entry name" value="Glutathione S-transferase A1"/>
    <property type="match status" value="1"/>
</dbReference>
<dbReference type="Gene3D" id="1.20.1050.10">
    <property type="match status" value="1"/>
</dbReference>
<dbReference type="Gene3D" id="3.40.30.10">
    <property type="entry name" value="Glutaredoxin"/>
    <property type="match status" value="1"/>
</dbReference>
<dbReference type="InterPro" id="IPR010987">
    <property type="entry name" value="Glutathione-S-Trfase_C-like"/>
</dbReference>
<dbReference type="InterPro" id="IPR036282">
    <property type="entry name" value="Glutathione-S-Trfase_C_sf"/>
</dbReference>
<dbReference type="InterPro" id="IPR004045">
    <property type="entry name" value="Glutathione_S-Trfase_N"/>
</dbReference>
<dbReference type="InterPro" id="IPR003080">
    <property type="entry name" value="GST_alpha"/>
</dbReference>
<dbReference type="InterPro" id="IPR004046">
    <property type="entry name" value="GST_C"/>
</dbReference>
<dbReference type="InterPro" id="IPR050213">
    <property type="entry name" value="GST_superfamily"/>
</dbReference>
<dbReference type="InterPro" id="IPR036249">
    <property type="entry name" value="Thioredoxin-like_sf"/>
</dbReference>
<dbReference type="PANTHER" id="PTHR11571">
    <property type="entry name" value="GLUTATHIONE S-TRANSFERASE"/>
    <property type="match status" value="1"/>
</dbReference>
<dbReference type="PANTHER" id="PTHR11571:SF107">
    <property type="entry name" value="GLUTATHIONE S-TRANSFERASE A1"/>
    <property type="match status" value="1"/>
</dbReference>
<dbReference type="Pfam" id="PF14497">
    <property type="entry name" value="GST_C_3"/>
    <property type="match status" value="1"/>
</dbReference>
<dbReference type="Pfam" id="PF02798">
    <property type="entry name" value="GST_N"/>
    <property type="match status" value="1"/>
</dbReference>
<dbReference type="PRINTS" id="PR01266">
    <property type="entry name" value="GSTRNSFRASEA"/>
</dbReference>
<dbReference type="SFLD" id="SFLDG01205">
    <property type="entry name" value="AMPS.1"/>
    <property type="match status" value="1"/>
</dbReference>
<dbReference type="SFLD" id="SFLDG00363">
    <property type="entry name" value="AMPS_(cytGST):_Alpha-__Mu-__Pi"/>
    <property type="match status" value="1"/>
</dbReference>
<dbReference type="SUPFAM" id="SSF47616">
    <property type="entry name" value="GST C-terminal domain-like"/>
    <property type="match status" value="1"/>
</dbReference>
<dbReference type="SUPFAM" id="SSF52833">
    <property type="entry name" value="Thioredoxin-like"/>
    <property type="match status" value="1"/>
</dbReference>
<dbReference type="PROSITE" id="PS50405">
    <property type="entry name" value="GST_CTER"/>
    <property type="match status" value="1"/>
</dbReference>
<dbReference type="PROSITE" id="PS50404">
    <property type="entry name" value="GST_NTER"/>
    <property type="match status" value="1"/>
</dbReference>
<reference key="1">
    <citation type="journal article" date="1993" name="Biochim. Biophys. Acta">
        <title>Nucleotide sequence of class-alpha glutathione S-transferases from chicken liver.</title>
        <authorList>
            <person name="Liu L.-F."/>
            <person name="Wu S.-H."/>
            <person name="Tam M.F."/>
        </authorList>
    </citation>
    <scope>NUCLEOTIDE SEQUENCE [MRNA]</scope>
    <source>
        <tissue>Liver</tissue>
    </source>
</reference>
<sequence length="221" mass="25299">MSGKPVLHYANTRGRMESVRWLLAAAGVEFEEKFLEKKEDLQKLKSDGSLLFQQVPMVEIDGMKMVQTRAILNYIAGKYNLYGKDLKERALIDMYVEGLADLYELIMMNVVQPADKKEEHLANALDKAANRYFPVFEKVLKDHGHDFLVGNKLSRADVHLLETILAVEESKPDALAKFPLLQSFKARTSNIPNIKKFLQPGSQRKPRLEEKDIPRLMAIFH</sequence>
<evidence type="ECO:0000250" key="1">
    <source>
        <dbReference type="UniProtKB" id="P08263"/>
    </source>
</evidence>
<evidence type="ECO:0000250" key="2">
    <source>
        <dbReference type="UniProtKB" id="P13745"/>
    </source>
</evidence>
<evidence type="ECO:0000250" key="3">
    <source>
        <dbReference type="UniProtKB" id="P30711"/>
    </source>
</evidence>
<evidence type="ECO:0000305" key="4"/>
<protein>
    <recommendedName>
        <fullName>Glutathione S-transferase</fullName>
        <ecNumber evidence="1">2.5.1.18</ecNumber>
    </recommendedName>
    <alternativeName>
        <fullName>GST class-alpha</fullName>
    </alternativeName>
</protein>
<proteinExistence type="evidence at transcript level"/>
<organism>
    <name type="scientific">Gallus gallus</name>
    <name type="common">Chicken</name>
    <dbReference type="NCBI Taxonomy" id="9031"/>
    <lineage>
        <taxon>Eukaryota</taxon>
        <taxon>Metazoa</taxon>
        <taxon>Chordata</taxon>
        <taxon>Craniata</taxon>
        <taxon>Vertebrata</taxon>
        <taxon>Euteleostomi</taxon>
        <taxon>Archelosauria</taxon>
        <taxon>Archosauria</taxon>
        <taxon>Dinosauria</taxon>
        <taxon>Saurischia</taxon>
        <taxon>Theropoda</taxon>
        <taxon>Coelurosauria</taxon>
        <taxon>Aves</taxon>
        <taxon>Neognathae</taxon>
        <taxon>Galloanserae</taxon>
        <taxon>Galliformes</taxon>
        <taxon>Phasianidae</taxon>
        <taxon>Phasianinae</taxon>
        <taxon>Gallus</taxon>
    </lineage>
</organism>
<name>GSTA1_CHICK</name>